<dbReference type="EMBL" id="M59039">
    <property type="protein sequence ID" value="AAA62738.1"/>
    <property type="molecule type" value="mRNA"/>
</dbReference>
<dbReference type="EMBL" id="M59037">
    <property type="status" value="NOT_ANNOTATED_CDS"/>
    <property type="molecule type" value="Genomic_DNA"/>
</dbReference>
<dbReference type="EMBL" id="M59038">
    <property type="protein sequence ID" value="AAA63167.1"/>
    <property type="molecule type" value="Genomic_DNA"/>
</dbReference>
<dbReference type="PIR" id="A39535">
    <property type="entry name" value="A39535"/>
</dbReference>
<dbReference type="RefSeq" id="NP_990741.1">
    <property type="nucleotide sequence ID" value="NM_205410.1"/>
</dbReference>
<dbReference type="SMR" id="P26677"/>
<dbReference type="FunCoup" id="P26677">
    <property type="interactions" value="28"/>
</dbReference>
<dbReference type="STRING" id="9031.ENSGALP00000042569"/>
<dbReference type="PaxDb" id="9031-ENSGALP00000042569"/>
<dbReference type="GeneID" id="396378"/>
<dbReference type="KEGG" id="gga:396378"/>
<dbReference type="CTD" id="5350"/>
<dbReference type="eggNOG" id="ENOG502S97F">
    <property type="taxonomic scope" value="Eukaryota"/>
</dbReference>
<dbReference type="InParanoid" id="P26677"/>
<dbReference type="OrthoDB" id="8897306at2759"/>
<dbReference type="PhylomeDB" id="P26677"/>
<dbReference type="PRO" id="PR:P26677"/>
<dbReference type="Proteomes" id="UP000000539">
    <property type="component" value="Unassembled WGS sequence"/>
</dbReference>
<dbReference type="GO" id="GO:0016020">
    <property type="term" value="C:membrane"/>
    <property type="evidence" value="ECO:0000318"/>
    <property type="project" value="GO_Central"/>
</dbReference>
<dbReference type="GO" id="GO:0031966">
    <property type="term" value="C:mitochondrial membrane"/>
    <property type="evidence" value="ECO:0007669"/>
    <property type="project" value="UniProtKB-SubCell"/>
</dbReference>
<dbReference type="GO" id="GO:0016529">
    <property type="term" value="C:sarcoplasmic reticulum"/>
    <property type="evidence" value="ECO:0000318"/>
    <property type="project" value="GO_Central"/>
</dbReference>
<dbReference type="GO" id="GO:0033017">
    <property type="term" value="C:sarcoplasmic reticulum membrane"/>
    <property type="evidence" value="ECO:0000250"/>
    <property type="project" value="UniProtKB"/>
</dbReference>
<dbReference type="GO" id="GO:0042030">
    <property type="term" value="F:ATPase inhibitor activity"/>
    <property type="evidence" value="ECO:0000318"/>
    <property type="project" value="GO_Central"/>
</dbReference>
<dbReference type="GO" id="GO:0050802">
    <property type="term" value="P:circadian sleep/wake cycle, sleep"/>
    <property type="evidence" value="ECO:0000250"/>
    <property type="project" value="UniProtKB"/>
</dbReference>
<dbReference type="GO" id="GO:0045475">
    <property type="term" value="P:locomotor rhythm"/>
    <property type="evidence" value="ECO:0000250"/>
    <property type="project" value="UniProtKB"/>
</dbReference>
<dbReference type="GO" id="GO:1902081">
    <property type="term" value="P:negative regulation of calcium ion import into sarcoplasmic reticulum"/>
    <property type="evidence" value="ECO:0000318"/>
    <property type="project" value="GO_Central"/>
</dbReference>
<dbReference type="GO" id="GO:0010459">
    <property type="term" value="P:negative regulation of heart rate"/>
    <property type="evidence" value="ECO:0000318"/>
    <property type="project" value="GO_Central"/>
</dbReference>
<dbReference type="GO" id="GO:0051924">
    <property type="term" value="P:regulation of calcium ion transport"/>
    <property type="evidence" value="ECO:0000250"/>
    <property type="project" value="UniProtKB"/>
</dbReference>
<dbReference type="GO" id="GO:0008542">
    <property type="term" value="P:visual learning"/>
    <property type="evidence" value="ECO:0000250"/>
    <property type="project" value="UniProtKB"/>
</dbReference>
<dbReference type="CDD" id="cd20250">
    <property type="entry name" value="Phospholamban"/>
    <property type="match status" value="1"/>
</dbReference>
<dbReference type="FunFam" id="1.20.5.290:FF:000001">
    <property type="entry name" value="Cardiac phospholamban"/>
    <property type="match status" value="1"/>
</dbReference>
<dbReference type="Gene3D" id="1.20.5.290">
    <property type="entry name" value="Phospholamban"/>
    <property type="match status" value="1"/>
</dbReference>
<dbReference type="InterPro" id="IPR005984">
    <property type="entry name" value="PLB"/>
</dbReference>
<dbReference type="NCBIfam" id="TIGR01294">
    <property type="entry name" value="P_lamban"/>
    <property type="match status" value="1"/>
</dbReference>
<dbReference type="PANTHER" id="PTHR21194">
    <property type="entry name" value="CARDIAC PHOSPHOLAMBAN"/>
    <property type="match status" value="1"/>
</dbReference>
<dbReference type="PANTHER" id="PTHR21194:SF1">
    <property type="entry name" value="CARDIAC PHOSPHOLAMBAN"/>
    <property type="match status" value="1"/>
</dbReference>
<dbReference type="Pfam" id="PF04272">
    <property type="entry name" value="Phospholamban"/>
    <property type="match status" value="1"/>
</dbReference>
<dbReference type="PIRSF" id="PIRSF001665">
    <property type="entry name" value="PLB"/>
    <property type="match status" value="1"/>
</dbReference>
<gene>
    <name type="primary">PLN</name>
</gene>
<proteinExistence type="evidence at transcript level"/>
<protein>
    <recommendedName>
        <fullName evidence="8">Phospholamban</fullName>
        <shortName>PLB</shortName>
    </recommendedName>
</protein>
<sequence>MEKVQYITRSALRRASTLEVNPQARQRLQELFVNFCLILICLLLICIIVMLL</sequence>
<keyword id="KW-0007">Acetylation</keyword>
<keyword id="KW-0256">Endoplasmic reticulum</keyword>
<keyword id="KW-0472">Membrane</keyword>
<keyword id="KW-0496">Mitochondrion</keyword>
<keyword id="KW-0597">Phosphoprotein</keyword>
<keyword id="KW-1185">Reference proteome</keyword>
<keyword id="KW-0703">Sarcoplasmic reticulum</keyword>
<keyword id="KW-0812">Transmembrane</keyword>
<keyword id="KW-1133">Transmembrane helix</keyword>
<name>PPLA_CHICK</name>
<comment type="function">
    <text evidence="3 4">Reversibly inhibits the activity of ATP2A2/SERCA2 in cardiac sarcoplasmic reticulum by decreasing the apparent affinity of the ATPase for Ca(2+). Binds preferentially to the ATP-bound E1 conformational form of ATP2A2 which predominates at low Ca(2+) concentrations during the diastolic phase of the cardiac cycle. Inhibits ATP2A2 Ca(2+) affinity by disrupting its allosteric activation by ATP. Modulates the contractility of the heart muscle in response to physiological stimuli via its effects on ATP2A2. Modulates calcium re-uptake during muscle relaxation and plays an important role in calcium homeostasis in the heart muscle. The degree of ATP2A2 inhibition depends on the oligomeric state of PLN. ATP2A2 inhibition is alleviated by PLN phosphorylation (By similarity).</text>
</comment>
<comment type="subunit">
    <text evidence="3">Homopentamer.</text>
</comment>
<comment type="subcellular location">
    <subcellularLocation>
        <location evidence="3">Endoplasmic reticulum membrane</location>
        <topology evidence="6">Single-pass membrane protein</topology>
    </subcellularLocation>
    <subcellularLocation>
        <location evidence="3">Sarcoplasmic reticulum membrane</location>
        <topology evidence="6">Single-pass membrane protein</topology>
    </subcellularLocation>
    <subcellularLocation>
        <location evidence="2">Mitochondrion membrane</location>
        <topology evidence="6">Single-pass membrane protein</topology>
    </subcellularLocation>
    <subcellularLocation>
        <location evidence="5">Membrane</location>
        <topology evidence="6">Single-pass membrane protein</topology>
    </subcellularLocation>
</comment>
<comment type="tissue specificity">
    <text evidence="7">Heart.</text>
</comment>
<comment type="PTM">
    <text evidence="3">Phosphorylated in response to beta-adrenergic stimulation. Phosphorylation by PKA abolishes the inhibition of ATP2A2-mediated calcium uptake (By similarity).</text>
</comment>
<comment type="similarity">
    <text evidence="9">Belongs to the phospholamban family.</text>
</comment>
<organism>
    <name type="scientific">Gallus gallus</name>
    <name type="common">Chicken</name>
    <dbReference type="NCBI Taxonomy" id="9031"/>
    <lineage>
        <taxon>Eukaryota</taxon>
        <taxon>Metazoa</taxon>
        <taxon>Chordata</taxon>
        <taxon>Craniata</taxon>
        <taxon>Vertebrata</taxon>
        <taxon>Euteleostomi</taxon>
        <taxon>Archelosauria</taxon>
        <taxon>Archosauria</taxon>
        <taxon>Dinosauria</taxon>
        <taxon>Saurischia</taxon>
        <taxon>Theropoda</taxon>
        <taxon>Coelurosauria</taxon>
        <taxon>Aves</taxon>
        <taxon>Neognathae</taxon>
        <taxon>Galloanserae</taxon>
        <taxon>Galliformes</taxon>
        <taxon>Phasianidae</taxon>
        <taxon>Phasianinae</taxon>
        <taxon>Gallus</taxon>
    </lineage>
</organism>
<feature type="chain" id="PRO_0000191249" description="Phospholamban">
    <location>
        <begin position="1"/>
        <end position="52"/>
    </location>
</feature>
<feature type="topological domain" description="Cytoplasmic" evidence="6">
    <location>
        <begin position="1"/>
        <end position="31"/>
    </location>
</feature>
<feature type="transmembrane region" description="Helical" evidence="6">
    <location>
        <begin position="32"/>
        <end position="52"/>
    </location>
</feature>
<feature type="modified residue" description="N-acetylmethionine" evidence="1">
    <location>
        <position position="1"/>
    </location>
</feature>
<feature type="modified residue" description="Phosphoserine; by PKA" evidence="1">
    <location>
        <position position="16"/>
    </location>
</feature>
<feature type="modified residue" description="Phosphothreonine; by CaMK" evidence="1">
    <location>
        <position position="17"/>
    </location>
</feature>
<evidence type="ECO:0000250" key="1"/>
<evidence type="ECO:0000250" key="2">
    <source>
        <dbReference type="UniProtKB" id="A4IFH6"/>
    </source>
</evidence>
<evidence type="ECO:0000250" key="3">
    <source>
        <dbReference type="UniProtKB" id="P26678"/>
    </source>
</evidence>
<evidence type="ECO:0000250" key="4">
    <source>
        <dbReference type="UniProtKB" id="P61012"/>
    </source>
</evidence>
<evidence type="ECO:0000250" key="5">
    <source>
        <dbReference type="UniProtKB" id="P61014"/>
    </source>
</evidence>
<evidence type="ECO:0000255" key="6"/>
<evidence type="ECO:0000269" key="7">
    <source>
    </source>
</evidence>
<evidence type="ECO:0000303" key="8">
    <source>
    </source>
</evidence>
<evidence type="ECO:0000305" key="9"/>
<reference key="1">
    <citation type="journal article" date="1991" name="J. Biol. Chem.">
        <title>Characterization of cDNA and genomic sequences encoding a chicken phospholamban.</title>
        <authorList>
            <person name="Toyofuku T."/>
            <person name="Zak R."/>
        </authorList>
    </citation>
    <scope>NUCLEOTIDE SEQUENCE [GENOMIC DNA / MRNA]</scope>
    <scope>TISSUE SPECIFICITY</scope>
</reference>
<accession>P26677</accession>